<organism>
    <name type="scientific">Arabidopsis thaliana</name>
    <name type="common">Mouse-ear cress</name>
    <dbReference type="NCBI Taxonomy" id="3702"/>
    <lineage>
        <taxon>Eukaryota</taxon>
        <taxon>Viridiplantae</taxon>
        <taxon>Streptophyta</taxon>
        <taxon>Embryophyta</taxon>
        <taxon>Tracheophyta</taxon>
        <taxon>Spermatophyta</taxon>
        <taxon>Magnoliopsida</taxon>
        <taxon>eudicotyledons</taxon>
        <taxon>Gunneridae</taxon>
        <taxon>Pentapetalae</taxon>
        <taxon>rosids</taxon>
        <taxon>malvids</taxon>
        <taxon>Brassicales</taxon>
        <taxon>Brassicaceae</taxon>
        <taxon>Camelineae</taxon>
        <taxon>Arabidopsis</taxon>
    </lineage>
</organism>
<reference key="1">
    <citation type="journal article" date="2000" name="Nature">
        <title>Sequence and analysis of chromosome 1 of the plant Arabidopsis thaliana.</title>
        <authorList>
            <person name="Theologis A."/>
            <person name="Ecker J.R."/>
            <person name="Palm C.J."/>
            <person name="Federspiel N.A."/>
            <person name="Kaul S."/>
            <person name="White O."/>
            <person name="Alonso J."/>
            <person name="Altafi H."/>
            <person name="Araujo R."/>
            <person name="Bowman C.L."/>
            <person name="Brooks S.Y."/>
            <person name="Buehler E."/>
            <person name="Chan A."/>
            <person name="Chao Q."/>
            <person name="Chen H."/>
            <person name="Cheuk R.F."/>
            <person name="Chin C.W."/>
            <person name="Chung M.K."/>
            <person name="Conn L."/>
            <person name="Conway A.B."/>
            <person name="Conway A.R."/>
            <person name="Creasy T.H."/>
            <person name="Dewar K."/>
            <person name="Dunn P."/>
            <person name="Etgu P."/>
            <person name="Feldblyum T.V."/>
            <person name="Feng J.-D."/>
            <person name="Fong B."/>
            <person name="Fujii C.Y."/>
            <person name="Gill J.E."/>
            <person name="Goldsmith A.D."/>
            <person name="Haas B."/>
            <person name="Hansen N.F."/>
            <person name="Hughes B."/>
            <person name="Huizar L."/>
            <person name="Hunter J.L."/>
            <person name="Jenkins J."/>
            <person name="Johnson-Hopson C."/>
            <person name="Khan S."/>
            <person name="Khaykin E."/>
            <person name="Kim C.J."/>
            <person name="Koo H.L."/>
            <person name="Kremenetskaia I."/>
            <person name="Kurtz D.B."/>
            <person name="Kwan A."/>
            <person name="Lam B."/>
            <person name="Langin-Hooper S."/>
            <person name="Lee A."/>
            <person name="Lee J.M."/>
            <person name="Lenz C.A."/>
            <person name="Li J.H."/>
            <person name="Li Y.-P."/>
            <person name="Lin X."/>
            <person name="Liu S.X."/>
            <person name="Liu Z.A."/>
            <person name="Luros J.S."/>
            <person name="Maiti R."/>
            <person name="Marziali A."/>
            <person name="Militscher J."/>
            <person name="Miranda M."/>
            <person name="Nguyen M."/>
            <person name="Nierman W.C."/>
            <person name="Osborne B.I."/>
            <person name="Pai G."/>
            <person name="Peterson J."/>
            <person name="Pham P.K."/>
            <person name="Rizzo M."/>
            <person name="Rooney T."/>
            <person name="Rowley D."/>
            <person name="Sakano H."/>
            <person name="Salzberg S.L."/>
            <person name="Schwartz J.R."/>
            <person name="Shinn P."/>
            <person name="Southwick A.M."/>
            <person name="Sun H."/>
            <person name="Tallon L.J."/>
            <person name="Tambunga G."/>
            <person name="Toriumi M.J."/>
            <person name="Town C.D."/>
            <person name="Utterback T."/>
            <person name="Van Aken S."/>
            <person name="Vaysberg M."/>
            <person name="Vysotskaia V.S."/>
            <person name="Walker M."/>
            <person name="Wu D."/>
            <person name="Yu G."/>
            <person name="Fraser C.M."/>
            <person name="Venter J.C."/>
            <person name="Davis R.W."/>
        </authorList>
    </citation>
    <scope>NUCLEOTIDE SEQUENCE [LARGE SCALE GENOMIC DNA]</scope>
    <source>
        <strain>cv. Columbia</strain>
    </source>
</reference>
<reference key="2">
    <citation type="journal article" date="2017" name="Plant J.">
        <title>Araport11: a complete reannotation of the Arabidopsis thaliana reference genome.</title>
        <authorList>
            <person name="Cheng C.Y."/>
            <person name="Krishnakumar V."/>
            <person name="Chan A.P."/>
            <person name="Thibaud-Nissen F."/>
            <person name="Schobel S."/>
            <person name="Town C.D."/>
        </authorList>
    </citation>
    <scope>GENOME REANNOTATION</scope>
    <source>
        <strain>cv. Columbia</strain>
    </source>
</reference>
<reference key="3">
    <citation type="journal article" date="2003" name="Science">
        <title>Empirical analysis of transcriptional activity in the Arabidopsis genome.</title>
        <authorList>
            <person name="Yamada K."/>
            <person name="Lim J."/>
            <person name="Dale J.M."/>
            <person name="Chen H."/>
            <person name="Shinn P."/>
            <person name="Palm C.J."/>
            <person name="Southwick A.M."/>
            <person name="Wu H.C."/>
            <person name="Kim C.J."/>
            <person name="Nguyen M."/>
            <person name="Pham P.K."/>
            <person name="Cheuk R.F."/>
            <person name="Karlin-Newmann G."/>
            <person name="Liu S.X."/>
            <person name="Lam B."/>
            <person name="Sakano H."/>
            <person name="Wu T."/>
            <person name="Yu G."/>
            <person name="Miranda M."/>
            <person name="Quach H.L."/>
            <person name="Tripp M."/>
            <person name="Chang C.H."/>
            <person name="Lee J.M."/>
            <person name="Toriumi M.J."/>
            <person name="Chan M.M."/>
            <person name="Tang C.C."/>
            <person name="Onodera C.S."/>
            <person name="Deng J.M."/>
            <person name="Akiyama K."/>
            <person name="Ansari Y."/>
            <person name="Arakawa T."/>
            <person name="Banh J."/>
            <person name="Banno F."/>
            <person name="Bowser L."/>
            <person name="Brooks S.Y."/>
            <person name="Carninci P."/>
            <person name="Chao Q."/>
            <person name="Choy N."/>
            <person name="Enju A."/>
            <person name="Goldsmith A.D."/>
            <person name="Gurjal M."/>
            <person name="Hansen N.F."/>
            <person name="Hayashizaki Y."/>
            <person name="Johnson-Hopson C."/>
            <person name="Hsuan V.W."/>
            <person name="Iida K."/>
            <person name="Karnes M."/>
            <person name="Khan S."/>
            <person name="Koesema E."/>
            <person name="Ishida J."/>
            <person name="Jiang P.X."/>
            <person name="Jones T."/>
            <person name="Kawai J."/>
            <person name="Kamiya A."/>
            <person name="Meyers C."/>
            <person name="Nakajima M."/>
            <person name="Narusaka M."/>
            <person name="Seki M."/>
            <person name="Sakurai T."/>
            <person name="Satou M."/>
            <person name="Tamse R."/>
            <person name="Vaysberg M."/>
            <person name="Wallender E.K."/>
            <person name="Wong C."/>
            <person name="Yamamura Y."/>
            <person name="Yuan S."/>
            <person name="Shinozaki K."/>
            <person name="Davis R.W."/>
            <person name="Theologis A."/>
            <person name="Ecker J.R."/>
        </authorList>
    </citation>
    <scope>NUCLEOTIDE SEQUENCE [LARGE SCALE MRNA]</scope>
    <source>
        <strain>cv. Columbia</strain>
    </source>
</reference>
<reference key="4">
    <citation type="submission" date="2002-03" db="EMBL/GenBank/DDBJ databases">
        <title>Full-length cDNA from Arabidopsis thaliana.</title>
        <authorList>
            <person name="Brover V.V."/>
            <person name="Troukhan M.E."/>
            <person name="Alexandrov N.A."/>
            <person name="Lu Y.-P."/>
            <person name="Flavell R.B."/>
            <person name="Feldmann K.A."/>
        </authorList>
    </citation>
    <scope>NUCLEOTIDE SEQUENCE [LARGE SCALE MRNA]</scope>
</reference>
<reference key="5">
    <citation type="journal article" date="2008" name="Plant Signal. Behav.">
        <title>Arabidopsis eIF3e interacts with subunits of the ribosome, Cop9 signalosome and proteasome.</title>
        <authorList>
            <person name="Paz-Aviram T."/>
            <person name="Yahalom A."/>
            <person name="Chamovitz D.A."/>
        </authorList>
    </citation>
    <scope>INTERACTION WITH TIF3E1</scope>
</reference>
<reference key="6">
    <citation type="journal article" date="2019" name="Plant Direct">
        <title>Two members of the DUF579 family are responsible for arabinogalactan methylation in Arabidopsis.</title>
        <authorList>
            <person name="Temple H."/>
            <person name="Mortimer J.C."/>
            <person name="Tryfona T."/>
            <person name="Yu X."/>
            <person name="Lopez-Hernandez F."/>
            <person name="Sorieul M."/>
            <person name="Anders N."/>
            <person name="Dupree P."/>
        </authorList>
    </citation>
    <scope>FUNCTION</scope>
    <scope>CATALYTIC ACTIVITY</scope>
    <scope>SUBCELLULAR LOCATION</scope>
    <scope>DISRUPTION PHENOTYPE</scope>
</reference>
<keyword id="KW-0333">Golgi apparatus</keyword>
<keyword id="KW-0472">Membrane</keyword>
<keyword id="KW-0489">Methyltransferase</keyword>
<keyword id="KW-1185">Reference proteome</keyword>
<keyword id="KW-0808">Transferase</keyword>
<keyword id="KW-0812">Transmembrane</keyword>
<keyword id="KW-1133">Transmembrane helix</keyword>
<sequence length="289" mass="32356">MNTLIPSEKRWIITGVLLAGLVGGALLFTSFIRAADETLFLCSTASAKSRAVAAAADYEATPIQLQAIVHYATSNVVPQQNLAEISISFNILKKLAPANFLVFGLGRDSLMWASLNPRGKTLFLEEDLEWFQKVTKDSPFLRAHHVRYRTQLQQADSLLRSYKTEPKCFPAKSYLRGNEKCKLALTGLPDEFYDTEWDLLMVDAPKGYFAEAPGRMAAIFSAAVMARNRKKPGVTHVFLHDVNRRVEKTFAEEFLCRKYRVNAAGRLWHFAIPPAAANATIDSGDYRFC</sequence>
<feature type="chain" id="PRO_0000434768" description="Arabinogalactan O-methyltransferase 1">
    <location>
        <begin position="1"/>
        <end position="289"/>
    </location>
</feature>
<feature type="transmembrane region" description="Helical" evidence="1">
    <location>
        <begin position="12"/>
        <end position="32"/>
    </location>
</feature>
<feature type="sequence conflict" description="In Ref. 4; AAM61740." evidence="5" ref="4">
    <original>K</original>
    <variation>N</variation>
    <location>
        <position position="167"/>
    </location>
</feature>
<gene>
    <name type="primary">AGM1</name>
    <name evidence="7" type="ordered locus">At1g27930</name>
    <name evidence="6" type="ORF">F13K9.4</name>
</gene>
<dbReference type="EC" id="2.1.1.-" evidence="3"/>
<dbReference type="EMBL" id="AC069471">
    <property type="protein sequence ID" value="AAG51480.1"/>
    <property type="molecule type" value="Genomic_DNA"/>
</dbReference>
<dbReference type="EMBL" id="CP002684">
    <property type="protein sequence ID" value="AEE30892.1"/>
    <property type="molecule type" value="Genomic_DNA"/>
</dbReference>
<dbReference type="EMBL" id="AY050385">
    <property type="protein sequence ID" value="AAK91402.1"/>
    <property type="molecule type" value="mRNA"/>
</dbReference>
<dbReference type="EMBL" id="AY124820">
    <property type="protein sequence ID" value="AAM70529.1"/>
    <property type="molecule type" value="mRNA"/>
</dbReference>
<dbReference type="EMBL" id="AY085189">
    <property type="protein sequence ID" value="AAM61740.1"/>
    <property type="molecule type" value="mRNA"/>
</dbReference>
<dbReference type="PIR" id="F86404">
    <property type="entry name" value="F86404"/>
</dbReference>
<dbReference type="RefSeq" id="NP_564297.1">
    <property type="nucleotide sequence ID" value="NM_102558.5"/>
</dbReference>
<dbReference type="FunCoup" id="Q9C7F9">
    <property type="interactions" value="591"/>
</dbReference>
<dbReference type="STRING" id="3702.Q9C7F9"/>
<dbReference type="PaxDb" id="3702-AT1G27930.1"/>
<dbReference type="ProteomicsDB" id="250894"/>
<dbReference type="EnsemblPlants" id="AT1G27930.1">
    <property type="protein sequence ID" value="AT1G27930.1"/>
    <property type="gene ID" value="AT1G27930"/>
</dbReference>
<dbReference type="GeneID" id="839686"/>
<dbReference type="Gramene" id="AT1G27930.1">
    <property type="protein sequence ID" value="AT1G27930.1"/>
    <property type="gene ID" value="AT1G27930"/>
</dbReference>
<dbReference type="KEGG" id="ath:AT1G27930"/>
<dbReference type="Araport" id="AT1G27930"/>
<dbReference type="TAIR" id="AT1G27930">
    <property type="gene designation" value="AGM1"/>
</dbReference>
<dbReference type="eggNOG" id="ENOG502QST5">
    <property type="taxonomic scope" value="Eukaryota"/>
</dbReference>
<dbReference type="HOGENOM" id="CLU_053427_1_0_1"/>
<dbReference type="InParanoid" id="Q9C7F9"/>
<dbReference type="OMA" id="MAAVWTA"/>
<dbReference type="PhylomeDB" id="Q9C7F9"/>
<dbReference type="PRO" id="PR:Q9C7F9"/>
<dbReference type="Proteomes" id="UP000006548">
    <property type="component" value="Chromosome 1"/>
</dbReference>
<dbReference type="ExpressionAtlas" id="Q9C7F9">
    <property type="expression patterns" value="baseline and differential"/>
</dbReference>
<dbReference type="GO" id="GO:0005768">
    <property type="term" value="C:endosome"/>
    <property type="evidence" value="ECO:0007005"/>
    <property type="project" value="TAIR"/>
</dbReference>
<dbReference type="GO" id="GO:0005794">
    <property type="term" value="C:Golgi apparatus"/>
    <property type="evidence" value="ECO:0000314"/>
    <property type="project" value="TAIR"/>
</dbReference>
<dbReference type="GO" id="GO:0005797">
    <property type="term" value="C:Golgi medial cisterna"/>
    <property type="evidence" value="ECO:0007005"/>
    <property type="project" value="TAIR"/>
</dbReference>
<dbReference type="GO" id="GO:0000139">
    <property type="term" value="C:Golgi membrane"/>
    <property type="evidence" value="ECO:0007669"/>
    <property type="project" value="UniProtKB-SubCell"/>
</dbReference>
<dbReference type="GO" id="GO:0005634">
    <property type="term" value="C:nucleus"/>
    <property type="evidence" value="ECO:0007005"/>
    <property type="project" value="TAIR"/>
</dbReference>
<dbReference type="GO" id="GO:0005802">
    <property type="term" value="C:trans-Golgi network"/>
    <property type="evidence" value="ECO:0007005"/>
    <property type="project" value="TAIR"/>
</dbReference>
<dbReference type="GO" id="GO:0030775">
    <property type="term" value="F:glucuronoxylan 4-O-methyltransferase activity"/>
    <property type="evidence" value="ECO:0000315"/>
    <property type="project" value="TAIR"/>
</dbReference>
<dbReference type="GO" id="GO:0009827">
    <property type="term" value="P:plant-type cell wall modification"/>
    <property type="evidence" value="ECO:0000315"/>
    <property type="project" value="TAIR"/>
</dbReference>
<dbReference type="GO" id="GO:0006479">
    <property type="term" value="P:protein methylation"/>
    <property type="evidence" value="ECO:0000315"/>
    <property type="project" value="TAIR"/>
</dbReference>
<dbReference type="GO" id="GO:0045492">
    <property type="term" value="P:xylan biosynthetic process"/>
    <property type="evidence" value="ECO:0007669"/>
    <property type="project" value="InterPro"/>
</dbReference>
<dbReference type="FunFam" id="3.40.50.150:FF:000263">
    <property type="entry name" value="Putative methyltransferase"/>
    <property type="match status" value="1"/>
</dbReference>
<dbReference type="Gene3D" id="3.40.50.150">
    <property type="entry name" value="Vaccinia Virus protein VP39"/>
    <property type="match status" value="1"/>
</dbReference>
<dbReference type="InterPro" id="IPR006514">
    <property type="entry name" value="IRX15/GXM/AGM"/>
</dbReference>
<dbReference type="InterPro" id="IPR029063">
    <property type="entry name" value="SAM-dependent_MTases_sf"/>
</dbReference>
<dbReference type="NCBIfam" id="TIGR01627">
    <property type="entry name" value="A_thal_3515"/>
    <property type="match status" value="1"/>
</dbReference>
<dbReference type="PANTHER" id="PTHR31444">
    <property type="entry name" value="OS11G0490100 PROTEIN"/>
    <property type="match status" value="1"/>
</dbReference>
<dbReference type="Pfam" id="PF21729">
    <property type="entry name" value="IRX15_IRX15L_GXM"/>
    <property type="match status" value="1"/>
</dbReference>
<accession>Q9C7F9</accession>
<accession>Q8LEW4</accession>
<evidence type="ECO:0000255" key="1"/>
<evidence type="ECO:0000269" key="2">
    <source>
    </source>
</evidence>
<evidence type="ECO:0000269" key="3">
    <source>
    </source>
</evidence>
<evidence type="ECO:0000303" key="4">
    <source>
    </source>
</evidence>
<evidence type="ECO:0000305" key="5"/>
<evidence type="ECO:0000312" key="6">
    <source>
        <dbReference type="EMBL" id="AAG51480.1"/>
    </source>
</evidence>
<evidence type="ECO:0000312" key="7">
    <source>
        <dbReference type="EMBL" id="AEE30892.1"/>
    </source>
</evidence>
<comment type="function">
    <text evidence="3">Involved in the methylation of glucuronic acid of different plant cell wall component, but mainly on side chains of arabinogalactans.</text>
</comment>
<comment type="subunit">
    <text evidence="2">Binds to the translation initiation factors TIF3E1.</text>
</comment>
<comment type="subcellular location">
    <subcellularLocation>
        <location evidence="3">Golgi apparatus membrane</location>
        <topology evidence="1">Single-pass membrane protein</topology>
    </subcellularLocation>
</comment>
<comment type="disruption phenotype">
    <text evidence="3">Strong reduction of methylation of glucuronic acid in several oligosaccharide chains of plant cell wall components (PubMed:31245760). The double mutant agm1 and agm2 results in the absence of methylation on arabinogalactan glucoronic acid side chains (PubMed:31245760).</text>
</comment>
<comment type="similarity">
    <text evidence="5">Belongs to the methyltransferase superfamily.</text>
</comment>
<proteinExistence type="evidence at protein level"/>
<protein>
    <recommendedName>
        <fullName evidence="4">Arabinogalactan O-methyltransferase 1</fullName>
        <ecNumber evidence="3">2.1.1.-</ecNumber>
    </recommendedName>
</protein>
<name>AGM11_ARATH</name>